<sequence length="249" mass="28426">MTRYKATISYDGYAFAGFQRQSHARSVQEEIEKTLTRLNKGQTITVHGAGRTDSGVHALGQVIHFDLPYQMDEEKLRFALDTQSPEDIDVISIELVADDFHCRYAKHSKTYEFILDRGRPKNPMRRHYATHFPYPLDVERMQIAIKKLEGTHDFTGFTASGTSVEDKVRTITEASLIVDETGQFLTFTFSGNGFLYKQIRNMVGTLLKIGNNRMPVEQIDLILEKKDRQLAGPTAAPNGLYLKEIRYEE</sequence>
<comment type="function">
    <text evidence="1">Formation of pseudouridine at positions 38, 39 and 40 in the anticodon stem and loop of transfer RNAs.</text>
</comment>
<comment type="catalytic activity">
    <reaction evidence="1">
        <text>uridine(38/39/40) in tRNA = pseudouridine(38/39/40) in tRNA</text>
        <dbReference type="Rhea" id="RHEA:22376"/>
        <dbReference type="Rhea" id="RHEA-COMP:10085"/>
        <dbReference type="Rhea" id="RHEA-COMP:10087"/>
        <dbReference type="ChEBI" id="CHEBI:65314"/>
        <dbReference type="ChEBI" id="CHEBI:65315"/>
        <dbReference type="EC" id="5.4.99.12"/>
    </reaction>
</comment>
<comment type="subunit">
    <text evidence="1">Homodimer.</text>
</comment>
<comment type="similarity">
    <text evidence="1">Belongs to the tRNA pseudouridine synthase TruA family.</text>
</comment>
<reference key="1">
    <citation type="journal article" date="2001" name="Microb. Drug Resist.">
        <title>Annotated draft genomic sequence from a Streptococcus pneumoniae type 19F clinical isolate.</title>
        <authorList>
            <person name="Dopazo J."/>
            <person name="Mendoza A."/>
            <person name="Herrero J."/>
            <person name="Caldara F."/>
            <person name="Humbert Y."/>
            <person name="Friedli L."/>
            <person name="Guerrier M."/>
            <person name="Grand-Schenk E."/>
            <person name="Gandin C."/>
            <person name="de Francesco M."/>
            <person name="Polissi A."/>
            <person name="Buell G."/>
            <person name="Feger G."/>
            <person name="Garcia E."/>
            <person name="Peitsch M."/>
            <person name="Garcia-Bustos J.F."/>
        </authorList>
    </citation>
    <scope>NUCLEOTIDE SEQUENCE [LARGE SCALE GENOMIC DNA]</scope>
    <source>
        <strain>G54</strain>
    </source>
</reference>
<reference key="2">
    <citation type="submission" date="2008-03" db="EMBL/GenBank/DDBJ databases">
        <title>Pneumococcal beta glucoside metabolism investigated by whole genome comparison.</title>
        <authorList>
            <person name="Mulas L."/>
            <person name="Trappetti C."/>
            <person name="Hakenbeck R."/>
            <person name="Iannelli F."/>
            <person name="Pozzi G."/>
            <person name="Davidsen T.M."/>
            <person name="Tettelin H."/>
            <person name="Oggioni M."/>
        </authorList>
    </citation>
    <scope>NUCLEOTIDE SEQUENCE [LARGE SCALE GENOMIC DNA]</scope>
    <source>
        <strain>G54</strain>
    </source>
</reference>
<accession>B5E6N8</accession>
<feature type="chain" id="PRO_1000097791" description="tRNA pseudouridine synthase A">
    <location>
        <begin position="1"/>
        <end position="249"/>
    </location>
</feature>
<feature type="active site" description="Nucleophile" evidence="1">
    <location>
        <position position="53"/>
    </location>
</feature>
<feature type="binding site" evidence="1">
    <location>
        <position position="111"/>
    </location>
    <ligand>
        <name>substrate</name>
    </ligand>
</feature>
<keyword id="KW-0413">Isomerase</keyword>
<keyword id="KW-0819">tRNA processing</keyword>
<protein>
    <recommendedName>
        <fullName evidence="1">tRNA pseudouridine synthase A</fullName>
        <ecNumber evidence="1">5.4.99.12</ecNumber>
    </recommendedName>
    <alternativeName>
        <fullName evidence="1">tRNA pseudouridine(38-40) synthase</fullName>
    </alternativeName>
    <alternativeName>
        <fullName evidence="1">tRNA pseudouridylate synthase I</fullName>
    </alternativeName>
    <alternativeName>
        <fullName evidence="1">tRNA-uridine isomerase I</fullName>
    </alternativeName>
</protein>
<dbReference type="EC" id="5.4.99.12" evidence="1"/>
<dbReference type="EMBL" id="CP001015">
    <property type="protein sequence ID" value="ACF55159.1"/>
    <property type="molecule type" value="Genomic_DNA"/>
</dbReference>
<dbReference type="SMR" id="B5E6N8"/>
<dbReference type="KEGG" id="spx:SPG_1522"/>
<dbReference type="HOGENOM" id="CLU_014673_0_1_9"/>
<dbReference type="GO" id="GO:0003723">
    <property type="term" value="F:RNA binding"/>
    <property type="evidence" value="ECO:0007669"/>
    <property type="project" value="InterPro"/>
</dbReference>
<dbReference type="GO" id="GO:0160147">
    <property type="term" value="F:tRNA pseudouridine(38-40) synthase activity"/>
    <property type="evidence" value="ECO:0007669"/>
    <property type="project" value="UniProtKB-EC"/>
</dbReference>
<dbReference type="GO" id="GO:0031119">
    <property type="term" value="P:tRNA pseudouridine synthesis"/>
    <property type="evidence" value="ECO:0007669"/>
    <property type="project" value="UniProtKB-UniRule"/>
</dbReference>
<dbReference type="CDD" id="cd02570">
    <property type="entry name" value="PseudoU_synth_EcTruA"/>
    <property type="match status" value="1"/>
</dbReference>
<dbReference type="FunFam" id="3.30.70.580:FF:000001">
    <property type="entry name" value="tRNA pseudouridine synthase A"/>
    <property type="match status" value="1"/>
</dbReference>
<dbReference type="FunFam" id="3.30.70.660:FF:000009">
    <property type="entry name" value="tRNA pseudouridine synthase A"/>
    <property type="match status" value="1"/>
</dbReference>
<dbReference type="Gene3D" id="3.30.70.660">
    <property type="entry name" value="Pseudouridine synthase I, catalytic domain, C-terminal subdomain"/>
    <property type="match status" value="1"/>
</dbReference>
<dbReference type="Gene3D" id="3.30.70.580">
    <property type="entry name" value="Pseudouridine synthase I, catalytic domain, N-terminal subdomain"/>
    <property type="match status" value="1"/>
</dbReference>
<dbReference type="HAMAP" id="MF_00171">
    <property type="entry name" value="TruA"/>
    <property type="match status" value="1"/>
</dbReference>
<dbReference type="InterPro" id="IPR020103">
    <property type="entry name" value="PsdUridine_synth_cat_dom_sf"/>
</dbReference>
<dbReference type="InterPro" id="IPR001406">
    <property type="entry name" value="PsdUridine_synth_TruA"/>
</dbReference>
<dbReference type="InterPro" id="IPR020097">
    <property type="entry name" value="PsdUridine_synth_TruA_a/b_dom"/>
</dbReference>
<dbReference type="InterPro" id="IPR020095">
    <property type="entry name" value="PsdUridine_synth_TruA_C"/>
</dbReference>
<dbReference type="InterPro" id="IPR020094">
    <property type="entry name" value="TruA/RsuA/RluB/E/F_N"/>
</dbReference>
<dbReference type="NCBIfam" id="TIGR00071">
    <property type="entry name" value="hisT_truA"/>
    <property type="match status" value="1"/>
</dbReference>
<dbReference type="PANTHER" id="PTHR11142">
    <property type="entry name" value="PSEUDOURIDYLATE SYNTHASE"/>
    <property type="match status" value="1"/>
</dbReference>
<dbReference type="PANTHER" id="PTHR11142:SF0">
    <property type="entry name" value="TRNA PSEUDOURIDINE SYNTHASE-LIKE 1"/>
    <property type="match status" value="1"/>
</dbReference>
<dbReference type="Pfam" id="PF01416">
    <property type="entry name" value="PseudoU_synth_1"/>
    <property type="match status" value="2"/>
</dbReference>
<dbReference type="PIRSF" id="PIRSF001430">
    <property type="entry name" value="tRNA_psdUrid_synth"/>
    <property type="match status" value="1"/>
</dbReference>
<dbReference type="SUPFAM" id="SSF55120">
    <property type="entry name" value="Pseudouridine synthase"/>
    <property type="match status" value="1"/>
</dbReference>
<name>TRUA_STRP4</name>
<proteinExistence type="inferred from homology"/>
<organism>
    <name type="scientific">Streptococcus pneumoniae serotype 19F (strain G54)</name>
    <dbReference type="NCBI Taxonomy" id="512566"/>
    <lineage>
        <taxon>Bacteria</taxon>
        <taxon>Bacillati</taxon>
        <taxon>Bacillota</taxon>
        <taxon>Bacilli</taxon>
        <taxon>Lactobacillales</taxon>
        <taxon>Streptococcaceae</taxon>
        <taxon>Streptococcus</taxon>
    </lineage>
</organism>
<gene>
    <name evidence="1" type="primary">truA</name>
    <name type="ordered locus">SPG_1522</name>
</gene>
<evidence type="ECO:0000255" key="1">
    <source>
        <dbReference type="HAMAP-Rule" id="MF_00171"/>
    </source>
</evidence>